<feature type="signal peptide" evidence="1">
    <location>
        <begin position="1"/>
        <end position="35"/>
    </location>
</feature>
<feature type="chain" id="PRO_0000022107" description="Proline-rich membrane anchor 1">
    <location>
        <begin position="36"/>
        <end position="153"/>
    </location>
</feature>
<feature type="topological domain" description="Extracellular" evidence="2">
    <location>
        <begin position="36"/>
        <end position="92"/>
    </location>
</feature>
<feature type="transmembrane region" description="Helical" evidence="2">
    <location>
        <begin position="93"/>
        <end position="113"/>
    </location>
</feature>
<feature type="topological domain" description="Cytoplasmic" evidence="2">
    <location>
        <begin position="114"/>
        <end position="153"/>
    </location>
</feature>
<feature type="domain" description="PRAD">
    <location>
        <begin position="56"/>
        <end position="70"/>
    </location>
</feature>
<feature type="region of interest" description="Disordered" evidence="3">
    <location>
        <begin position="59"/>
        <end position="79"/>
    </location>
</feature>
<feature type="compositionally biased region" description="Pro residues" evidence="3">
    <location>
        <begin position="59"/>
        <end position="71"/>
    </location>
</feature>
<feature type="glycosylation site" description="N-linked (GlcNAc...) asparagine" evidence="6">
    <location>
        <position position="79"/>
    </location>
</feature>
<feature type="splice variant" id="VSP_008494" description="In isoform 2." evidence="7">
    <original>KPLR</original>
    <variation>NHAI</variation>
    <location>
        <begin position="121"/>
        <end position="124"/>
    </location>
</feature>
<feature type="splice variant" id="VSP_008495" description="In isoform 2." evidence="7">
    <location>
        <begin position="125"/>
        <end position="153"/>
    </location>
</feature>
<feature type="sequence variant" id="VAR_035980" description="In a colorectal cancer sample; somatic mutation." evidence="4">
    <original>A</original>
    <variation>V</variation>
    <location>
        <position position="22"/>
    </location>
</feature>
<reference key="1">
    <citation type="journal article" date="2002" name="Neuron">
        <title>PRiMA: the membrane anchor of acetylcholinesterase in the brain.</title>
        <authorList>
            <person name="Perrier A.L."/>
            <person name="Massoulie J."/>
            <person name="Krejci E."/>
        </authorList>
    </citation>
    <scope>NUCLEOTIDE SEQUENCE [MRNA] (ISOFORMS 1 AND 2)</scope>
</reference>
<reference key="2">
    <citation type="journal article" date="2009" name="Brain Res.">
        <title>Transcriptional regulation of proline-rich membrane anchor (PRiMA) of globular form acetylcholinesterase in neuron: an inductive effect of neuron differentiation.</title>
        <authorList>
            <person name="Xie H.Q."/>
            <person name="Choi R.C."/>
            <person name="Leung K.W."/>
            <person name="Chen V.P."/>
            <person name="Chu G.K."/>
            <person name="Tsim K.W."/>
        </authorList>
    </citation>
    <scope>INDUCTION</scope>
</reference>
<reference key="3">
    <citation type="journal article" date="2012" name="Neurosci. Lett.">
        <title>N-linked glycosylation of proline-rich membrane anchor (PRiMA) is not required for assembly and trafficking of globular tetrameric acetylcholinesterase.</title>
        <authorList>
            <person name="Chan W.K."/>
            <person name="Chen V.P."/>
            <person name="Luk W.K."/>
            <person name="Choi R.C."/>
            <person name="Tsim K.W."/>
        </authorList>
    </citation>
    <scope>GLYCOSYLATION AT ASN-79</scope>
</reference>
<reference key="4">
    <citation type="journal article" date="2006" name="Science">
        <title>The consensus coding sequences of human breast and colorectal cancers.</title>
        <authorList>
            <person name="Sjoeblom T."/>
            <person name="Jones S."/>
            <person name="Wood L.D."/>
            <person name="Parsons D.W."/>
            <person name="Lin J."/>
            <person name="Barber T.D."/>
            <person name="Mandelker D."/>
            <person name="Leary R.J."/>
            <person name="Ptak J."/>
            <person name="Silliman N."/>
            <person name="Szabo S."/>
            <person name="Buckhaults P."/>
            <person name="Farrell C."/>
            <person name="Meeh P."/>
            <person name="Markowitz S.D."/>
            <person name="Willis J."/>
            <person name="Dawson D."/>
            <person name="Willson J.K.V."/>
            <person name="Gazdar A.F."/>
            <person name="Hartigan J."/>
            <person name="Wu L."/>
            <person name="Liu C."/>
            <person name="Parmigiani G."/>
            <person name="Park B.H."/>
            <person name="Bachman K.E."/>
            <person name="Papadopoulos N."/>
            <person name="Vogelstein B."/>
            <person name="Kinzler K.W."/>
            <person name="Velculescu V.E."/>
        </authorList>
    </citation>
    <scope>VARIANT [LARGE SCALE ANALYSIS] VAL-22</scope>
</reference>
<evidence type="ECO:0000250" key="1"/>
<evidence type="ECO:0000255" key="2"/>
<evidence type="ECO:0000256" key="3">
    <source>
        <dbReference type="SAM" id="MobiDB-lite"/>
    </source>
</evidence>
<evidence type="ECO:0000269" key="4">
    <source>
    </source>
</evidence>
<evidence type="ECO:0000269" key="5">
    <source>
    </source>
</evidence>
<evidence type="ECO:0000269" key="6">
    <source>
    </source>
</evidence>
<evidence type="ECO:0000303" key="7">
    <source>
    </source>
</evidence>
<evidence type="ECO:0000305" key="8"/>
<sequence length="153" mass="16689">MLLRDLVLRRGCCWSSLLLHCALHPLWGFVQVTHGEPQKSCSKVTDSCRHVCQCRPPPPLPPPPPPPPPPRLLSAPAPNSTSCPTEESWWSGLVIIIAVCCASLVFLTVLVIICYKAIKRKPLRKDENGTSVAEYPMSASQSNKGVDVNNAVV</sequence>
<organism>
    <name type="scientific">Homo sapiens</name>
    <name type="common">Human</name>
    <dbReference type="NCBI Taxonomy" id="9606"/>
    <lineage>
        <taxon>Eukaryota</taxon>
        <taxon>Metazoa</taxon>
        <taxon>Chordata</taxon>
        <taxon>Craniata</taxon>
        <taxon>Vertebrata</taxon>
        <taxon>Euteleostomi</taxon>
        <taxon>Mammalia</taxon>
        <taxon>Eutheria</taxon>
        <taxon>Euarchontoglires</taxon>
        <taxon>Primates</taxon>
        <taxon>Haplorrhini</taxon>
        <taxon>Catarrhini</taxon>
        <taxon>Hominidae</taxon>
        <taxon>Homo</taxon>
    </lineage>
</organism>
<name>PRIMA_HUMAN</name>
<protein>
    <recommendedName>
        <fullName>Proline-rich membrane anchor 1</fullName>
        <shortName>PRiMA</shortName>
    </recommendedName>
</protein>
<keyword id="KW-0025">Alternative splicing</keyword>
<keyword id="KW-0965">Cell junction</keyword>
<keyword id="KW-1003">Cell membrane</keyword>
<keyword id="KW-1015">Disulfide bond</keyword>
<keyword id="KW-0325">Glycoprotein</keyword>
<keyword id="KW-0472">Membrane</keyword>
<keyword id="KW-0531">Neurotransmitter degradation</keyword>
<keyword id="KW-1267">Proteomics identification</keyword>
<keyword id="KW-1185">Reference proteome</keyword>
<keyword id="KW-0732">Signal</keyword>
<keyword id="KW-0770">Synapse</keyword>
<keyword id="KW-0812">Transmembrane</keyword>
<keyword id="KW-1133">Transmembrane helix</keyword>
<dbReference type="EMBL" id="AY225516">
    <property type="protein sequence ID" value="AAO74853.1"/>
    <property type="molecule type" value="mRNA"/>
</dbReference>
<dbReference type="EMBL" id="AY225517">
    <property type="protein sequence ID" value="AAO74854.1"/>
    <property type="molecule type" value="mRNA"/>
</dbReference>
<dbReference type="CCDS" id="CCDS9912.1">
    <molecule id="Q86XR5-1"/>
</dbReference>
<dbReference type="RefSeq" id="NP_821092.1">
    <molecule id="Q86XR5-1"/>
    <property type="nucleotide sequence ID" value="NM_178013.4"/>
</dbReference>
<dbReference type="RefSeq" id="XP_011534758.1">
    <molecule id="Q86XR5-1"/>
    <property type="nucleotide sequence ID" value="XM_011536456.3"/>
</dbReference>
<dbReference type="RefSeq" id="XP_054184930.1">
    <molecule id="Q86XR5-1"/>
    <property type="nucleotide sequence ID" value="XM_054328955.1"/>
</dbReference>
<dbReference type="RefSeq" id="XP_054231407.1">
    <molecule id="Q86XR5-1"/>
    <property type="nucleotide sequence ID" value="XM_054375432.1"/>
</dbReference>
<dbReference type="SMR" id="Q86XR5"/>
<dbReference type="BioGRID" id="126902">
    <property type="interactions" value="6"/>
</dbReference>
<dbReference type="FunCoup" id="Q86XR5">
    <property type="interactions" value="6"/>
</dbReference>
<dbReference type="IntAct" id="Q86XR5">
    <property type="interactions" value="1"/>
</dbReference>
<dbReference type="STRING" id="9606.ENSP00000376848"/>
<dbReference type="GlyCosmos" id="Q86XR5">
    <property type="glycosylation" value="1 site, No reported glycans"/>
</dbReference>
<dbReference type="GlyGen" id="Q86XR5">
    <property type="glycosylation" value="1 site"/>
</dbReference>
<dbReference type="iPTMnet" id="Q86XR5"/>
<dbReference type="PhosphoSitePlus" id="Q86XR5"/>
<dbReference type="BioMuta" id="PRIMA1"/>
<dbReference type="DMDM" id="37537937"/>
<dbReference type="MassIVE" id="Q86XR5"/>
<dbReference type="PaxDb" id="9606-ENSP00000376848"/>
<dbReference type="PeptideAtlas" id="Q86XR5"/>
<dbReference type="ProteomicsDB" id="70321">
    <molecule id="Q86XR5-1"/>
</dbReference>
<dbReference type="Antibodypedia" id="72168">
    <property type="antibodies" value="8 antibodies from 4 providers"/>
</dbReference>
<dbReference type="DNASU" id="145270"/>
<dbReference type="Ensembl" id="ENST00000316227.3">
    <molecule id="Q86XR5-2"/>
    <property type="protein sequence ID" value="ENSP00000320948.3"/>
    <property type="gene ID" value="ENSG00000175785.13"/>
</dbReference>
<dbReference type="Ensembl" id="ENST00000393140.6">
    <molecule id="Q86XR5-1"/>
    <property type="protein sequence ID" value="ENSP00000376848.1"/>
    <property type="gene ID" value="ENSG00000175785.13"/>
</dbReference>
<dbReference type="Ensembl" id="ENST00000393143.5">
    <molecule id="Q86XR5-1"/>
    <property type="protein sequence ID" value="ENSP00000376851.1"/>
    <property type="gene ID" value="ENSG00000175785.13"/>
</dbReference>
<dbReference type="Ensembl" id="ENST00000477603.5">
    <molecule id="Q86XR5-2"/>
    <property type="protein sequence ID" value="ENSP00000434370.1"/>
    <property type="gene ID" value="ENSG00000175785.13"/>
</dbReference>
<dbReference type="Ensembl" id="ENST00000611347.2">
    <molecule id="Q86XR5-1"/>
    <property type="protein sequence ID" value="ENSP00000479082.1"/>
    <property type="gene ID" value="ENSG00000274089.4"/>
</dbReference>
<dbReference type="Ensembl" id="ENST00000617019.3">
    <molecule id="Q86XR5-2"/>
    <property type="protein sequence ID" value="ENSP00000479855.1"/>
    <property type="gene ID" value="ENSG00000274089.4"/>
</dbReference>
<dbReference type="Ensembl" id="ENST00000627063.2">
    <molecule id="Q86XR5-2"/>
    <property type="protein sequence ID" value="ENSP00000486875.1"/>
    <property type="gene ID" value="ENSG00000274089.4"/>
</dbReference>
<dbReference type="Ensembl" id="ENST00000629961.2">
    <molecule id="Q86XR5-1"/>
    <property type="protein sequence ID" value="ENSP00000486953.1"/>
    <property type="gene ID" value="ENSG00000274089.4"/>
</dbReference>
<dbReference type="GeneID" id="145270"/>
<dbReference type="KEGG" id="hsa:145270"/>
<dbReference type="MANE-Select" id="ENST00000393140.6">
    <property type="protein sequence ID" value="ENSP00000376848.1"/>
    <property type="RefSeq nucleotide sequence ID" value="NM_178013.4"/>
    <property type="RefSeq protein sequence ID" value="NP_821092.1"/>
</dbReference>
<dbReference type="UCSC" id="uc001ybw.2">
    <molecule id="Q86XR5-1"/>
    <property type="organism name" value="human"/>
</dbReference>
<dbReference type="AGR" id="HGNC:18319"/>
<dbReference type="CTD" id="145270"/>
<dbReference type="DisGeNET" id="145270"/>
<dbReference type="GeneCards" id="PRIMA1"/>
<dbReference type="HGNC" id="HGNC:18319">
    <property type="gene designation" value="PRIMA1"/>
</dbReference>
<dbReference type="HPA" id="ENSG00000175785">
    <property type="expression patterns" value="Tissue enhanced (brain, intestine)"/>
</dbReference>
<dbReference type="MalaCards" id="PRIMA1"/>
<dbReference type="MIM" id="613851">
    <property type="type" value="gene"/>
</dbReference>
<dbReference type="neXtProt" id="NX_Q86XR5"/>
<dbReference type="OpenTargets" id="ENSG00000175785"/>
<dbReference type="PharmGKB" id="PA38315"/>
<dbReference type="VEuPathDB" id="HostDB:ENSG00000175785"/>
<dbReference type="eggNOG" id="ENOG502S414">
    <property type="taxonomic scope" value="Eukaryota"/>
</dbReference>
<dbReference type="GeneTree" id="ENSGT00390000006240"/>
<dbReference type="HOGENOM" id="CLU_144252_0_0_1"/>
<dbReference type="InParanoid" id="Q86XR5"/>
<dbReference type="OMA" id="SIAEYPM"/>
<dbReference type="OrthoDB" id="8885320at2759"/>
<dbReference type="PAN-GO" id="Q86XR5">
    <property type="GO annotations" value="0 GO annotations based on evolutionary models"/>
</dbReference>
<dbReference type="PhylomeDB" id="Q86XR5"/>
<dbReference type="TreeFam" id="TF337232"/>
<dbReference type="PathwayCommons" id="Q86XR5"/>
<dbReference type="SignaLink" id="Q86XR5"/>
<dbReference type="BioGRID-ORCS" id="145270">
    <property type="hits" value="12 hits in 1134 CRISPR screens"/>
</dbReference>
<dbReference type="ChiTaRS" id="PRIMA1">
    <property type="organism name" value="human"/>
</dbReference>
<dbReference type="GeneWiki" id="PRIMA1"/>
<dbReference type="GenomeRNAi" id="145270"/>
<dbReference type="Pharos" id="Q86XR5">
    <property type="development level" value="Tbio"/>
</dbReference>
<dbReference type="PRO" id="PR:Q86XR5"/>
<dbReference type="Proteomes" id="UP000005640">
    <property type="component" value="Chromosome 14"/>
</dbReference>
<dbReference type="RNAct" id="Q86XR5">
    <property type="molecule type" value="protein"/>
</dbReference>
<dbReference type="Bgee" id="ENSG00000175785">
    <property type="expression patterns" value="Expressed in tibial nerve and 94 other cell types or tissues"/>
</dbReference>
<dbReference type="ExpressionAtlas" id="Q86XR5">
    <property type="expression patterns" value="baseline and differential"/>
</dbReference>
<dbReference type="GO" id="GO:0070161">
    <property type="term" value="C:anchoring junction"/>
    <property type="evidence" value="ECO:0007669"/>
    <property type="project" value="UniProtKB-SubCell"/>
</dbReference>
<dbReference type="GO" id="GO:0005886">
    <property type="term" value="C:plasma membrane"/>
    <property type="evidence" value="ECO:0007669"/>
    <property type="project" value="UniProtKB-SubCell"/>
</dbReference>
<dbReference type="GO" id="GO:0045202">
    <property type="term" value="C:synapse"/>
    <property type="evidence" value="ECO:0007669"/>
    <property type="project" value="UniProtKB-SubCell"/>
</dbReference>
<dbReference type="InterPro" id="IPR029659">
    <property type="entry name" value="PRIMA1"/>
</dbReference>
<dbReference type="Pfam" id="PF16101">
    <property type="entry name" value="PRIMA1"/>
    <property type="match status" value="1"/>
</dbReference>
<comment type="function">
    <text evidence="1">Required to anchor acetylcholinesterase (ACHE) to the basal lamina of the neuromuscular junction and to the membrane of neuronal synapses in brain. Also able to organize ACHE into tetramers (By similarity).</text>
</comment>
<comment type="subunit">
    <text evidence="1">Interacts with ACHE, probably through disulfide bonds.</text>
</comment>
<comment type="subcellular location">
    <subcellularLocation>
        <location evidence="1">Cell membrane</location>
        <topology evidence="1">Single-pass type I membrane protein</topology>
    </subcellularLocation>
    <subcellularLocation>
        <location evidence="1">Cell junction</location>
    </subcellularLocation>
    <subcellularLocation>
        <location evidence="1">Synapse</location>
    </subcellularLocation>
    <text evidence="1">In the brain, PRIMA linked to ACHE is found in membrane rafts.</text>
</comment>
<comment type="alternative products">
    <event type="alternative splicing"/>
    <isoform>
        <id>Q86XR5-1</id>
        <name>1</name>
        <name>Variant I</name>
        <sequence type="displayed"/>
    </isoform>
    <isoform>
        <id>Q86XR5-2</id>
        <name>2</name>
        <name>Variant II</name>
        <sequence type="described" ref="VSP_008494 VSP_008495"/>
    </isoform>
</comment>
<comment type="induction">
    <text evidence="5">By RAF1.</text>
</comment>
<comment type="domain">
    <text evidence="1">The proline-rich attachment domain (PRAD) binds the AChE catalytic subunits.</text>
</comment>
<comment type="miscellaneous">
    <molecule>Isoform 2</molecule>
    <text evidence="8">May be produced at very low levels due to a premature stop codon in the mRNA, leading to nonsense-mediated mRNA decay.</text>
</comment>
<gene>
    <name type="primary">PRIMA1</name>
</gene>
<proteinExistence type="evidence at protein level"/>
<accession>Q86XR5</accession>
<accession>Q86XR6</accession>